<organism>
    <name type="scientific">Lycosa singoriensis</name>
    <name type="common">Wolf spider</name>
    <name type="synonym">Aranea singoriensis</name>
    <dbReference type="NCBI Taxonomy" id="434756"/>
    <lineage>
        <taxon>Eukaryota</taxon>
        <taxon>Metazoa</taxon>
        <taxon>Ecdysozoa</taxon>
        <taxon>Arthropoda</taxon>
        <taxon>Chelicerata</taxon>
        <taxon>Arachnida</taxon>
        <taxon>Araneae</taxon>
        <taxon>Araneomorphae</taxon>
        <taxon>Entelegynae</taxon>
        <taxon>Lycosoidea</taxon>
        <taxon>Lycosidae</taxon>
        <taxon>Lycosa</taxon>
    </lineage>
</organism>
<proteinExistence type="evidence at transcript level"/>
<keyword id="KW-1015">Disulfide bond</keyword>
<keyword id="KW-0964">Secreted</keyword>
<keyword id="KW-0732">Signal</keyword>
<keyword id="KW-0800">Toxin</keyword>
<feature type="signal peptide" evidence="2">
    <location>
        <begin position="1"/>
        <end position="20"/>
    </location>
</feature>
<feature type="propeptide" id="PRO_0000401813" evidence="1">
    <location>
        <begin position="21"/>
        <end position="26"/>
    </location>
</feature>
<feature type="chain" id="PRO_0000401814" description="U8-lycotoxin-Ls1p">
    <location>
        <begin position="27"/>
        <end position="77"/>
    </location>
</feature>
<evidence type="ECO:0000250" key="1"/>
<evidence type="ECO:0000255" key="2"/>
<evidence type="ECO:0000305" key="3"/>
<name>TX826_LYCSI</name>
<dbReference type="EMBL" id="EU926081">
    <property type="protein sequence ID" value="ACI41413.1"/>
    <property type="molecule type" value="mRNA"/>
</dbReference>
<dbReference type="EMBL" id="FM864085">
    <property type="protein sequence ID" value="CAS03682.1"/>
    <property type="molecule type" value="mRNA"/>
</dbReference>
<dbReference type="SMR" id="B6DCZ7"/>
<dbReference type="ArachnoServer" id="AS001020">
    <property type="toxin name" value="U8-lycotoxin-Ls1p"/>
</dbReference>
<dbReference type="GO" id="GO:0005576">
    <property type="term" value="C:extracellular region"/>
    <property type="evidence" value="ECO:0007669"/>
    <property type="project" value="UniProtKB-SubCell"/>
</dbReference>
<dbReference type="GO" id="GO:0090729">
    <property type="term" value="F:toxin activity"/>
    <property type="evidence" value="ECO:0007669"/>
    <property type="project" value="UniProtKB-KW"/>
</dbReference>
<dbReference type="InterPro" id="IPR019553">
    <property type="entry name" value="Spider_toxin_CSTX_knottin"/>
</dbReference>
<dbReference type="Pfam" id="PF10530">
    <property type="entry name" value="Toxin_35"/>
    <property type="match status" value="1"/>
</dbReference>
<comment type="subcellular location">
    <subcellularLocation>
        <location evidence="1">Secreted</location>
    </subcellularLocation>
</comment>
<comment type="tissue specificity">
    <text>Expressed by the venom gland.</text>
</comment>
<comment type="PTM">
    <text evidence="1">Contains 4 disulfide bonds.</text>
</comment>
<comment type="similarity">
    <text evidence="3">Belongs to the neurotoxin 19 (CSTX) family. 08 (U8-Lctx) subfamily.</text>
</comment>
<sequence length="77" mass="8625">MKLMIFTGLVLFAIVSLIEAQAENEKPCLPEYKVCTHVPGNCCSDLVCDCYGRYKSGAQIGRNCFCLQKGVIYKREN</sequence>
<accession>B6DCZ7</accession>
<protein>
    <recommendedName>
        <fullName>U8-lycotoxin-Ls1p</fullName>
    </recommendedName>
    <alternativeName>
        <fullName>Toxin-like structure LSTX-H26</fullName>
    </alternativeName>
</protein>
<reference key="1">
    <citation type="journal article" date="2010" name="Zoology">
        <title>Transcriptome analysis of the venom glands of the Chinese wolf spider Lycosa singoriensis.</title>
        <authorList>
            <person name="Zhang Y."/>
            <person name="Chen J."/>
            <person name="Tang X."/>
            <person name="Wang F."/>
            <person name="Jiang L."/>
            <person name="Xiong X."/>
            <person name="Wang M."/>
            <person name="Rong M."/>
            <person name="Liu Z."/>
            <person name="Liang S."/>
        </authorList>
    </citation>
    <scope>NUCLEOTIDE SEQUENCE [LARGE SCALE MRNA]</scope>
    <source>
        <tissue>Venom gland</tissue>
    </source>
</reference>